<dbReference type="EMBL" id="AP008934">
    <property type="protein sequence ID" value="BAE18794.1"/>
    <property type="molecule type" value="Genomic_DNA"/>
</dbReference>
<dbReference type="RefSeq" id="WP_011303382.1">
    <property type="nucleotide sequence ID" value="NZ_MTGA01000039.1"/>
</dbReference>
<dbReference type="SMR" id="Q49WR3"/>
<dbReference type="GeneID" id="3615139"/>
<dbReference type="KEGG" id="ssp:SSP1649"/>
<dbReference type="PATRIC" id="fig|342451.11.peg.1648"/>
<dbReference type="eggNOG" id="COG0322">
    <property type="taxonomic scope" value="Bacteria"/>
</dbReference>
<dbReference type="HOGENOM" id="CLU_014841_3_2_9"/>
<dbReference type="OrthoDB" id="9804933at2"/>
<dbReference type="Proteomes" id="UP000006371">
    <property type="component" value="Chromosome"/>
</dbReference>
<dbReference type="GO" id="GO:0005737">
    <property type="term" value="C:cytoplasm"/>
    <property type="evidence" value="ECO:0007669"/>
    <property type="project" value="UniProtKB-SubCell"/>
</dbReference>
<dbReference type="GO" id="GO:0009380">
    <property type="term" value="C:excinuclease repair complex"/>
    <property type="evidence" value="ECO:0007669"/>
    <property type="project" value="InterPro"/>
</dbReference>
<dbReference type="GO" id="GO:0003677">
    <property type="term" value="F:DNA binding"/>
    <property type="evidence" value="ECO:0007669"/>
    <property type="project" value="UniProtKB-UniRule"/>
</dbReference>
<dbReference type="GO" id="GO:0009381">
    <property type="term" value="F:excinuclease ABC activity"/>
    <property type="evidence" value="ECO:0007669"/>
    <property type="project" value="UniProtKB-UniRule"/>
</dbReference>
<dbReference type="GO" id="GO:0006289">
    <property type="term" value="P:nucleotide-excision repair"/>
    <property type="evidence" value="ECO:0007669"/>
    <property type="project" value="UniProtKB-UniRule"/>
</dbReference>
<dbReference type="GO" id="GO:0009432">
    <property type="term" value="P:SOS response"/>
    <property type="evidence" value="ECO:0007669"/>
    <property type="project" value="UniProtKB-UniRule"/>
</dbReference>
<dbReference type="CDD" id="cd10434">
    <property type="entry name" value="GIY-YIG_UvrC_Cho"/>
    <property type="match status" value="1"/>
</dbReference>
<dbReference type="FunFam" id="3.30.420.340:FF:000002">
    <property type="entry name" value="UvrABC system protein C"/>
    <property type="match status" value="1"/>
</dbReference>
<dbReference type="FunFam" id="3.40.1440.10:FF:000001">
    <property type="entry name" value="UvrABC system protein C"/>
    <property type="match status" value="1"/>
</dbReference>
<dbReference type="FunFam" id="4.10.860.10:FF:000007">
    <property type="entry name" value="UvrABC system protein C"/>
    <property type="match status" value="1"/>
</dbReference>
<dbReference type="Gene3D" id="1.10.150.20">
    <property type="entry name" value="5' to 3' exonuclease, C-terminal subdomain"/>
    <property type="match status" value="1"/>
</dbReference>
<dbReference type="Gene3D" id="3.40.1440.10">
    <property type="entry name" value="GIY-YIG endonuclease"/>
    <property type="match status" value="1"/>
</dbReference>
<dbReference type="Gene3D" id="4.10.860.10">
    <property type="entry name" value="UVR domain"/>
    <property type="match status" value="1"/>
</dbReference>
<dbReference type="Gene3D" id="3.30.420.340">
    <property type="entry name" value="UvrC, RNAse H endonuclease domain"/>
    <property type="match status" value="1"/>
</dbReference>
<dbReference type="HAMAP" id="MF_00203">
    <property type="entry name" value="UvrC"/>
    <property type="match status" value="1"/>
</dbReference>
<dbReference type="InterPro" id="IPR000305">
    <property type="entry name" value="GIY-YIG_endonuc"/>
</dbReference>
<dbReference type="InterPro" id="IPR035901">
    <property type="entry name" value="GIY-YIG_endonuc_sf"/>
</dbReference>
<dbReference type="InterPro" id="IPR047296">
    <property type="entry name" value="GIY-YIG_UvrC_Cho"/>
</dbReference>
<dbReference type="InterPro" id="IPR010994">
    <property type="entry name" value="RuvA_2-like"/>
</dbReference>
<dbReference type="InterPro" id="IPR001943">
    <property type="entry name" value="UVR_dom"/>
</dbReference>
<dbReference type="InterPro" id="IPR036876">
    <property type="entry name" value="UVR_dom_sf"/>
</dbReference>
<dbReference type="InterPro" id="IPR050066">
    <property type="entry name" value="UvrABC_protein_C"/>
</dbReference>
<dbReference type="InterPro" id="IPR004791">
    <property type="entry name" value="UvrC"/>
</dbReference>
<dbReference type="InterPro" id="IPR001162">
    <property type="entry name" value="UvrC_RNase_H_dom"/>
</dbReference>
<dbReference type="InterPro" id="IPR038476">
    <property type="entry name" value="UvrC_RNase_H_dom_sf"/>
</dbReference>
<dbReference type="NCBIfam" id="TIGR00194">
    <property type="entry name" value="uvrC"/>
    <property type="match status" value="1"/>
</dbReference>
<dbReference type="PANTHER" id="PTHR30562:SF1">
    <property type="entry name" value="UVRABC SYSTEM PROTEIN C"/>
    <property type="match status" value="1"/>
</dbReference>
<dbReference type="PANTHER" id="PTHR30562">
    <property type="entry name" value="UVRC/OXIDOREDUCTASE"/>
    <property type="match status" value="1"/>
</dbReference>
<dbReference type="Pfam" id="PF01541">
    <property type="entry name" value="GIY-YIG"/>
    <property type="match status" value="1"/>
</dbReference>
<dbReference type="Pfam" id="PF02151">
    <property type="entry name" value="UVR"/>
    <property type="match status" value="1"/>
</dbReference>
<dbReference type="Pfam" id="PF22920">
    <property type="entry name" value="UvrC_RNaseH"/>
    <property type="match status" value="1"/>
</dbReference>
<dbReference type="Pfam" id="PF08459">
    <property type="entry name" value="UvrC_RNaseH_dom"/>
    <property type="match status" value="1"/>
</dbReference>
<dbReference type="SMART" id="SM00465">
    <property type="entry name" value="GIYc"/>
    <property type="match status" value="1"/>
</dbReference>
<dbReference type="SUPFAM" id="SSF46600">
    <property type="entry name" value="C-terminal UvrC-binding domain of UvrB"/>
    <property type="match status" value="1"/>
</dbReference>
<dbReference type="SUPFAM" id="SSF82771">
    <property type="entry name" value="GIY-YIG endonuclease"/>
    <property type="match status" value="1"/>
</dbReference>
<dbReference type="SUPFAM" id="SSF47781">
    <property type="entry name" value="RuvA domain 2-like"/>
    <property type="match status" value="1"/>
</dbReference>
<dbReference type="PROSITE" id="PS50164">
    <property type="entry name" value="GIY_YIG"/>
    <property type="match status" value="1"/>
</dbReference>
<dbReference type="PROSITE" id="PS50151">
    <property type="entry name" value="UVR"/>
    <property type="match status" value="1"/>
</dbReference>
<dbReference type="PROSITE" id="PS50165">
    <property type="entry name" value="UVRC"/>
    <property type="match status" value="1"/>
</dbReference>
<organism>
    <name type="scientific">Staphylococcus saprophyticus subsp. saprophyticus (strain ATCC 15305 / DSM 20229 / NCIMB 8711 / NCTC 7292 / S-41)</name>
    <dbReference type="NCBI Taxonomy" id="342451"/>
    <lineage>
        <taxon>Bacteria</taxon>
        <taxon>Bacillati</taxon>
        <taxon>Bacillota</taxon>
        <taxon>Bacilli</taxon>
        <taxon>Bacillales</taxon>
        <taxon>Staphylococcaceae</taxon>
        <taxon>Staphylococcus</taxon>
    </lineage>
</organism>
<comment type="function">
    <text evidence="1">The UvrABC repair system catalyzes the recognition and processing of DNA lesions. UvrC both incises the 5' and 3' sides of the lesion. The N-terminal half is responsible for the 3' incision and the C-terminal half is responsible for the 5' incision.</text>
</comment>
<comment type="subunit">
    <text evidence="1">Interacts with UvrB in an incision complex.</text>
</comment>
<comment type="subcellular location">
    <subcellularLocation>
        <location evidence="1">Cytoplasm</location>
    </subcellularLocation>
</comment>
<comment type="similarity">
    <text evidence="1">Belongs to the UvrC family.</text>
</comment>
<reference key="1">
    <citation type="journal article" date="2005" name="Proc. Natl. Acad. Sci. U.S.A.">
        <title>Whole genome sequence of Staphylococcus saprophyticus reveals the pathogenesis of uncomplicated urinary tract infection.</title>
        <authorList>
            <person name="Kuroda M."/>
            <person name="Yamashita A."/>
            <person name="Hirakawa H."/>
            <person name="Kumano M."/>
            <person name="Morikawa K."/>
            <person name="Higashide M."/>
            <person name="Maruyama A."/>
            <person name="Inose Y."/>
            <person name="Matoba K."/>
            <person name="Toh H."/>
            <person name="Kuhara S."/>
            <person name="Hattori M."/>
            <person name="Ohta T."/>
        </authorList>
    </citation>
    <scope>NUCLEOTIDE SEQUENCE [LARGE SCALE GENOMIC DNA]</scope>
    <source>
        <strain>ATCC 15305 / DSM 20229 / NCIMB 8711 / NCTC 7292 / S-41</strain>
    </source>
</reference>
<gene>
    <name evidence="1" type="primary">uvrC</name>
    <name type="ordered locus">SSP1649</name>
</gene>
<keyword id="KW-0963">Cytoplasm</keyword>
<keyword id="KW-0227">DNA damage</keyword>
<keyword id="KW-0228">DNA excision</keyword>
<keyword id="KW-0234">DNA repair</keyword>
<keyword id="KW-0267">Excision nuclease</keyword>
<keyword id="KW-1185">Reference proteome</keyword>
<keyword id="KW-0742">SOS response</keyword>
<name>UVRC_STAS1</name>
<proteinExistence type="inferred from homology"/>
<evidence type="ECO:0000255" key="1">
    <source>
        <dbReference type="HAMAP-Rule" id="MF_00203"/>
    </source>
</evidence>
<protein>
    <recommendedName>
        <fullName evidence="1">UvrABC system protein C</fullName>
        <shortName evidence="1">Protein UvrC</shortName>
    </recommendedName>
    <alternativeName>
        <fullName evidence="1">Excinuclease ABC subunit C</fullName>
    </alternativeName>
</protein>
<sequence length="595" mass="68653">METYQEKIKQKLTVVPIEPGCYLMKDRNDQIIYVGKAKKLRNRLRSYFTGAHDAKTTRLVGEIRNFEFIVTSSETESLLLELNLIKQYQPRYNILLKDDKSYPFIKITKEKYPRLIVTRTVKKGSGKYFGPYPNAYSAQETKKLLDRIYPFRKCDKMPDKLCLYYHIGQCLGPCVYPVDLEKYAEMTKEITDFLNGEDKTILHNLEQKMQESSESLDFERAKEYRDLIQHIHNLNKKQKITSSDNTIRDVFGYSISKGWMCIQVFFIRQGNMIKRDATMIPLQQTEEEEFYTFIGQFYDLNQHILPKEVHVPKHLNKELIQSVVDTKIVQPLKGKKKDMVDLANHNAEVTLENKFELIAKDESRTVKAIEELGDVMGIQTPIRIEAFDNSNIQGVNPVSAMVSFIDGKPNKKGYRKYKIKTVDGPDDYKSMREVVRRRYTRVLNEGSPLPDLIIVDGGKGHMSGVIDVLENELGLDIPVAGLRKNDKHQTSEILYGEQAEVVPMKKNSQPFYLLQRIQDEVHRFAITFHRQTRQKTGLQSVLDTVDGIGAKRKTKLLRTFGSIKRMKEASVEDLKNSGLPQNVAENLHHALSNNS</sequence>
<feature type="chain" id="PRO_0000227475" description="UvrABC system protein C">
    <location>
        <begin position="1"/>
        <end position="595"/>
    </location>
</feature>
<feature type="domain" description="GIY-YIG" evidence="1">
    <location>
        <begin position="17"/>
        <end position="94"/>
    </location>
</feature>
<feature type="domain" description="UVR" evidence="1">
    <location>
        <begin position="199"/>
        <end position="234"/>
    </location>
</feature>
<accession>Q49WR3</accession>